<organism>
    <name type="scientific">Caulobacter vibrioides (strain NA1000 / CB15N)</name>
    <name type="common">Caulobacter crescentus</name>
    <dbReference type="NCBI Taxonomy" id="565050"/>
    <lineage>
        <taxon>Bacteria</taxon>
        <taxon>Pseudomonadati</taxon>
        <taxon>Pseudomonadota</taxon>
        <taxon>Alphaproteobacteria</taxon>
        <taxon>Caulobacterales</taxon>
        <taxon>Caulobacteraceae</taxon>
        <taxon>Caulobacter</taxon>
    </lineage>
</organism>
<proteinExistence type="inferred from homology"/>
<comment type="subcellular location">
    <subcellularLocation>
        <location evidence="1">Cytoplasm</location>
    </subcellularLocation>
</comment>
<comment type="similarity">
    <text evidence="1">Belongs to the TACO1 family.</text>
</comment>
<accession>B8H462</accession>
<feature type="chain" id="PRO_1000200085" description="Probable transcriptional regulatory protein CCNA_03352">
    <location>
        <begin position="1"/>
        <end position="251"/>
    </location>
</feature>
<protein>
    <recommendedName>
        <fullName evidence="1">Probable transcriptional regulatory protein CCNA_03352</fullName>
    </recommendedName>
</protein>
<keyword id="KW-0963">Cytoplasm</keyword>
<keyword id="KW-0238">DNA-binding</keyword>
<keyword id="KW-1185">Reference proteome</keyword>
<keyword id="KW-0804">Transcription</keyword>
<keyword id="KW-0805">Transcription regulation</keyword>
<gene>
    <name type="ordered locus">CCNA_03352</name>
</gene>
<dbReference type="EMBL" id="CP001340">
    <property type="protein sequence ID" value="ACL96816.1"/>
    <property type="molecule type" value="Genomic_DNA"/>
</dbReference>
<dbReference type="RefSeq" id="WP_010921076.1">
    <property type="nucleotide sequence ID" value="NC_011916.1"/>
</dbReference>
<dbReference type="RefSeq" id="YP_002518724.1">
    <property type="nucleotide sequence ID" value="NC_011916.1"/>
</dbReference>
<dbReference type="SMR" id="B8H462"/>
<dbReference type="GeneID" id="7332024"/>
<dbReference type="KEGG" id="ccs:CCNA_03352"/>
<dbReference type="PATRIC" id="fig|565050.3.peg.3265"/>
<dbReference type="HOGENOM" id="CLU_062974_3_0_5"/>
<dbReference type="OrthoDB" id="9781053at2"/>
<dbReference type="PhylomeDB" id="B8H462"/>
<dbReference type="Proteomes" id="UP000001364">
    <property type="component" value="Chromosome"/>
</dbReference>
<dbReference type="GO" id="GO:0005829">
    <property type="term" value="C:cytosol"/>
    <property type="evidence" value="ECO:0007669"/>
    <property type="project" value="TreeGrafter"/>
</dbReference>
<dbReference type="GO" id="GO:0003677">
    <property type="term" value="F:DNA binding"/>
    <property type="evidence" value="ECO:0007669"/>
    <property type="project" value="UniProtKB-UniRule"/>
</dbReference>
<dbReference type="GO" id="GO:0006355">
    <property type="term" value="P:regulation of DNA-templated transcription"/>
    <property type="evidence" value="ECO:0007669"/>
    <property type="project" value="UniProtKB-UniRule"/>
</dbReference>
<dbReference type="FunFam" id="1.10.10.200:FF:000002">
    <property type="entry name" value="Probable transcriptional regulatory protein CLM62_37755"/>
    <property type="match status" value="1"/>
</dbReference>
<dbReference type="Gene3D" id="1.10.10.200">
    <property type="match status" value="1"/>
</dbReference>
<dbReference type="Gene3D" id="3.30.70.980">
    <property type="match status" value="2"/>
</dbReference>
<dbReference type="HAMAP" id="MF_00693">
    <property type="entry name" value="Transcrip_reg_TACO1"/>
    <property type="match status" value="1"/>
</dbReference>
<dbReference type="InterPro" id="IPR017856">
    <property type="entry name" value="Integrase-like_N"/>
</dbReference>
<dbReference type="InterPro" id="IPR048300">
    <property type="entry name" value="TACO1_YebC-like_2nd/3rd_dom"/>
</dbReference>
<dbReference type="InterPro" id="IPR049083">
    <property type="entry name" value="TACO1_YebC_N"/>
</dbReference>
<dbReference type="InterPro" id="IPR002876">
    <property type="entry name" value="Transcrip_reg_TACO1-like"/>
</dbReference>
<dbReference type="InterPro" id="IPR026564">
    <property type="entry name" value="Transcrip_reg_TACO1-like_dom3"/>
</dbReference>
<dbReference type="InterPro" id="IPR029072">
    <property type="entry name" value="YebC-like"/>
</dbReference>
<dbReference type="NCBIfam" id="NF001030">
    <property type="entry name" value="PRK00110.1"/>
    <property type="match status" value="1"/>
</dbReference>
<dbReference type="NCBIfam" id="NF009044">
    <property type="entry name" value="PRK12378.1"/>
    <property type="match status" value="1"/>
</dbReference>
<dbReference type="NCBIfam" id="TIGR01033">
    <property type="entry name" value="YebC/PmpR family DNA-binding transcriptional regulator"/>
    <property type="match status" value="1"/>
</dbReference>
<dbReference type="PANTHER" id="PTHR12532:SF6">
    <property type="entry name" value="TRANSCRIPTIONAL REGULATORY PROTEIN YEBC-RELATED"/>
    <property type="match status" value="1"/>
</dbReference>
<dbReference type="PANTHER" id="PTHR12532">
    <property type="entry name" value="TRANSLATIONAL ACTIVATOR OF CYTOCHROME C OXIDASE 1"/>
    <property type="match status" value="1"/>
</dbReference>
<dbReference type="Pfam" id="PF20772">
    <property type="entry name" value="TACO1_YebC_N"/>
    <property type="match status" value="1"/>
</dbReference>
<dbReference type="Pfam" id="PF01709">
    <property type="entry name" value="Transcrip_reg"/>
    <property type="match status" value="1"/>
</dbReference>
<dbReference type="SUPFAM" id="SSF75625">
    <property type="entry name" value="YebC-like"/>
    <property type="match status" value="1"/>
</dbReference>
<reference key="1">
    <citation type="journal article" date="2010" name="J. Bacteriol.">
        <title>The genetic basis of laboratory adaptation in Caulobacter crescentus.</title>
        <authorList>
            <person name="Marks M.E."/>
            <person name="Castro-Rojas C.M."/>
            <person name="Teiling C."/>
            <person name="Du L."/>
            <person name="Kapatral V."/>
            <person name="Walunas T.L."/>
            <person name="Crosson S."/>
        </authorList>
    </citation>
    <scope>NUCLEOTIDE SEQUENCE [LARGE SCALE GENOMIC DNA]</scope>
    <source>
        <strain>NA1000 / CB15N</strain>
    </source>
</reference>
<name>Y3352_CAUVN</name>
<evidence type="ECO:0000255" key="1">
    <source>
        <dbReference type="HAMAP-Rule" id="MF_00693"/>
    </source>
</evidence>
<sequence length="251" mass="26902">MAGHSKFKNIMHRKGRADAARSKLFSKLSREITVAAKTGLPDPAMNPRLRLAVNNAKAESLPKDVIERAIKKSQMGDAADYSEIRYEGVAAGGVGIIVEVLTDNKNRAAANVRSYFTKMGGNMGATGSVTFNFDRVGQISYPAKAASEDDMMEAAIEAGADDVTSDMDEEGEGHTVYTAFESLNDVAAALEAKFGAASNTKIAWRPKMQVPVTGDAVATLMKLLDMLDEDDDVQAVYSNEDISDEDLAKLG</sequence>